<proteinExistence type="inferred from homology"/>
<dbReference type="EC" id="2.3.1.181" evidence="1"/>
<dbReference type="EMBL" id="AP009247">
    <property type="protein sequence ID" value="BAF61616.1"/>
    <property type="molecule type" value="Genomic_DNA"/>
</dbReference>
<dbReference type="RefSeq" id="WP_011929886.1">
    <property type="nucleotide sequence ID" value="NC_009465.1"/>
</dbReference>
<dbReference type="SMR" id="A5CWR5"/>
<dbReference type="STRING" id="412965.COSY_0497"/>
<dbReference type="KEGG" id="vok:COSY_0497"/>
<dbReference type="eggNOG" id="COG0321">
    <property type="taxonomic scope" value="Bacteria"/>
</dbReference>
<dbReference type="HOGENOM" id="CLU_035168_3_1_6"/>
<dbReference type="OrthoDB" id="9787061at2"/>
<dbReference type="UniPathway" id="UPA00538">
    <property type="reaction ID" value="UER00592"/>
</dbReference>
<dbReference type="Proteomes" id="UP000000247">
    <property type="component" value="Chromosome"/>
</dbReference>
<dbReference type="GO" id="GO:0005737">
    <property type="term" value="C:cytoplasm"/>
    <property type="evidence" value="ECO:0007669"/>
    <property type="project" value="UniProtKB-SubCell"/>
</dbReference>
<dbReference type="GO" id="GO:0033819">
    <property type="term" value="F:lipoyl(octanoyl) transferase activity"/>
    <property type="evidence" value="ECO:0007669"/>
    <property type="project" value="UniProtKB-EC"/>
</dbReference>
<dbReference type="GO" id="GO:0036211">
    <property type="term" value="P:protein modification process"/>
    <property type="evidence" value="ECO:0007669"/>
    <property type="project" value="InterPro"/>
</dbReference>
<dbReference type="CDD" id="cd16444">
    <property type="entry name" value="LipB"/>
    <property type="match status" value="1"/>
</dbReference>
<dbReference type="FunFam" id="3.30.930.10:FF:000020">
    <property type="entry name" value="Octanoyltransferase"/>
    <property type="match status" value="1"/>
</dbReference>
<dbReference type="Gene3D" id="3.30.930.10">
    <property type="entry name" value="Bira Bifunctional Protein, Domain 2"/>
    <property type="match status" value="1"/>
</dbReference>
<dbReference type="HAMAP" id="MF_00013">
    <property type="entry name" value="LipB"/>
    <property type="match status" value="1"/>
</dbReference>
<dbReference type="InterPro" id="IPR045864">
    <property type="entry name" value="aa-tRNA-synth_II/BPL/LPL"/>
</dbReference>
<dbReference type="InterPro" id="IPR004143">
    <property type="entry name" value="BPL_LPL_catalytic"/>
</dbReference>
<dbReference type="InterPro" id="IPR000544">
    <property type="entry name" value="Octanoyltransferase"/>
</dbReference>
<dbReference type="InterPro" id="IPR020605">
    <property type="entry name" value="Octanoyltransferase_CS"/>
</dbReference>
<dbReference type="NCBIfam" id="TIGR00214">
    <property type="entry name" value="lipB"/>
    <property type="match status" value="1"/>
</dbReference>
<dbReference type="NCBIfam" id="NF010922">
    <property type="entry name" value="PRK14342.1"/>
    <property type="match status" value="1"/>
</dbReference>
<dbReference type="PANTHER" id="PTHR10993:SF7">
    <property type="entry name" value="LIPOYLTRANSFERASE 2, MITOCHONDRIAL-RELATED"/>
    <property type="match status" value="1"/>
</dbReference>
<dbReference type="PANTHER" id="PTHR10993">
    <property type="entry name" value="OCTANOYLTRANSFERASE"/>
    <property type="match status" value="1"/>
</dbReference>
<dbReference type="Pfam" id="PF21948">
    <property type="entry name" value="LplA-B_cat"/>
    <property type="match status" value="1"/>
</dbReference>
<dbReference type="PIRSF" id="PIRSF016262">
    <property type="entry name" value="LPLase"/>
    <property type="match status" value="1"/>
</dbReference>
<dbReference type="SUPFAM" id="SSF55681">
    <property type="entry name" value="Class II aaRS and biotin synthetases"/>
    <property type="match status" value="1"/>
</dbReference>
<dbReference type="PROSITE" id="PS51733">
    <property type="entry name" value="BPL_LPL_CATALYTIC"/>
    <property type="match status" value="1"/>
</dbReference>
<dbReference type="PROSITE" id="PS01313">
    <property type="entry name" value="LIPB"/>
    <property type="match status" value="1"/>
</dbReference>
<comment type="function">
    <text evidence="1">Catalyzes the transfer of endogenously produced octanoic acid from octanoyl-acyl-carrier-protein onto the lipoyl domains of lipoate-dependent enzymes. Lipoyl-ACP can also act as a substrate although octanoyl-ACP is likely to be the physiological substrate.</text>
</comment>
<comment type="catalytic activity">
    <reaction evidence="1">
        <text>octanoyl-[ACP] + L-lysyl-[protein] = N(6)-octanoyl-L-lysyl-[protein] + holo-[ACP] + H(+)</text>
        <dbReference type="Rhea" id="RHEA:17665"/>
        <dbReference type="Rhea" id="RHEA-COMP:9636"/>
        <dbReference type="Rhea" id="RHEA-COMP:9685"/>
        <dbReference type="Rhea" id="RHEA-COMP:9752"/>
        <dbReference type="Rhea" id="RHEA-COMP:9928"/>
        <dbReference type="ChEBI" id="CHEBI:15378"/>
        <dbReference type="ChEBI" id="CHEBI:29969"/>
        <dbReference type="ChEBI" id="CHEBI:64479"/>
        <dbReference type="ChEBI" id="CHEBI:78463"/>
        <dbReference type="ChEBI" id="CHEBI:78809"/>
        <dbReference type="EC" id="2.3.1.181"/>
    </reaction>
</comment>
<comment type="pathway">
    <text evidence="1">Protein modification; protein lipoylation via endogenous pathway; protein N(6)-(lipoyl)lysine from octanoyl-[acyl-carrier-protein]: step 1/2.</text>
</comment>
<comment type="subcellular location">
    <subcellularLocation>
        <location evidence="1">Cytoplasm</location>
    </subcellularLocation>
</comment>
<comment type="miscellaneous">
    <text evidence="1">In the reaction, the free carboxyl group of octanoic acid is attached via an amide linkage to the epsilon-amino group of a specific lysine residue of lipoyl domains of lipoate-dependent enzymes.</text>
</comment>
<comment type="similarity">
    <text evidence="1">Belongs to the LipB family.</text>
</comment>
<feature type="chain" id="PRO_1000001142" description="Octanoyltransferase">
    <location>
        <begin position="1"/>
        <end position="204"/>
    </location>
</feature>
<feature type="domain" description="BPL/LPL catalytic" evidence="2">
    <location>
        <begin position="27"/>
        <end position="204"/>
    </location>
</feature>
<feature type="active site" description="Acyl-thioester intermediate" evidence="1">
    <location>
        <position position="164"/>
    </location>
</feature>
<feature type="binding site" evidence="1">
    <location>
        <begin position="66"/>
        <end position="73"/>
    </location>
    <ligand>
        <name>substrate</name>
    </ligand>
</feature>
<feature type="binding site" evidence="1">
    <location>
        <begin position="133"/>
        <end position="135"/>
    </location>
    <ligand>
        <name>substrate</name>
    </ligand>
</feature>
<feature type="binding site" evidence="1">
    <location>
        <begin position="146"/>
        <end position="148"/>
    </location>
    <ligand>
        <name>substrate</name>
    </ligand>
</feature>
<feature type="site" description="Lowers pKa of active site Cys" evidence="1">
    <location>
        <position position="130"/>
    </location>
</feature>
<evidence type="ECO:0000255" key="1">
    <source>
        <dbReference type="HAMAP-Rule" id="MF_00013"/>
    </source>
</evidence>
<evidence type="ECO:0000255" key="2">
    <source>
        <dbReference type="PROSITE-ProRule" id="PRU01067"/>
    </source>
</evidence>
<accession>A5CWR5</accession>
<gene>
    <name evidence="1" type="primary">lipB</name>
    <name type="ordered locus">COSY_0497</name>
</gene>
<protein>
    <recommendedName>
        <fullName evidence="1">Octanoyltransferase</fullName>
        <ecNumber evidence="1">2.3.1.181</ecNumber>
    </recommendedName>
    <alternativeName>
        <fullName evidence="1">Lipoate-protein ligase B</fullName>
    </alternativeName>
    <alternativeName>
        <fullName evidence="1">Lipoyl/octanoyl transferase</fullName>
    </alternativeName>
    <alternativeName>
        <fullName evidence="1">Octanoyl-[acyl-carrier-protein]-protein N-octanoyltransferase</fullName>
    </alternativeName>
</protein>
<sequence length="204" mass="23275">MRVINLGRQDYLNIWDKMKTFTNTRDKNTKDELWIVEHNPVFTQGVSSKPEHILSNTDIPIVQTDRGGQVTYHGPGQVIIYCLFDLKRLGMGVKRIIEIIENSIIDLLRTYTIKAHLKSGAPGVYIDNAKIAALGLRIKQSRIYHGLSLNIDMDLSPFIQINPCGYQNLKVTQLCDLTDSRDTLNIIAKKLSQILINYVSRNRH</sequence>
<keyword id="KW-0012">Acyltransferase</keyword>
<keyword id="KW-0963">Cytoplasm</keyword>
<keyword id="KW-1185">Reference proteome</keyword>
<keyword id="KW-0808">Transferase</keyword>
<name>LIPB_VESOH</name>
<organism>
    <name type="scientific">Vesicomyosocius okutanii subsp. Calyptogena okutanii (strain HA)</name>
    <dbReference type="NCBI Taxonomy" id="412965"/>
    <lineage>
        <taxon>Bacteria</taxon>
        <taxon>Pseudomonadati</taxon>
        <taxon>Pseudomonadota</taxon>
        <taxon>Gammaproteobacteria</taxon>
        <taxon>Candidatus Pseudothioglobaceae</taxon>
        <taxon>Candidatus Vesicomyosocius</taxon>
    </lineage>
</organism>
<reference key="1">
    <citation type="journal article" date="2007" name="Curr. Biol.">
        <title>Reduced genome of the thioautotrophic intracellular symbiont in a deep-sea clam, Calyptogena okutanii.</title>
        <authorList>
            <person name="Kuwahara H."/>
            <person name="Yoshida T."/>
            <person name="Takaki Y."/>
            <person name="Shimamura S."/>
            <person name="Nishi S."/>
            <person name="Harada M."/>
            <person name="Matsuyama K."/>
            <person name="Takishita K."/>
            <person name="Kawato M."/>
            <person name="Uematsu K."/>
            <person name="Fujiwara Y."/>
            <person name="Sato T."/>
            <person name="Kato C."/>
            <person name="Kitagawa M."/>
            <person name="Kato I."/>
            <person name="Maruyama T."/>
        </authorList>
    </citation>
    <scope>NUCLEOTIDE SEQUENCE [LARGE SCALE GENOMIC DNA]</scope>
    <source>
        <strain>HA</strain>
    </source>
</reference>